<name>HIGA1_MYCTO</name>
<proteinExistence type="inferred from homology"/>
<sequence length="149" mass="16760">MSIDFPLGDDLAGYIAEAIAADPSFKGTLEDAEEARRLVDALIALRKHCQLSQVEVAKRMGVRQPTVSGFEKEPSDPKLSTLQRYARALDARLRLVLEVPTLREVPTWHRLSSYRGSARDHQVRVGADKEILMQTNWARHISVRQVEVA</sequence>
<protein>
    <recommendedName>
        <fullName evidence="3">Antitoxin HigA1</fullName>
    </recommendedName>
</protein>
<evidence type="ECO:0000250" key="1">
    <source>
        <dbReference type="UniProtKB" id="P9WJA7"/>
    </source>
</evidence>
<evidence type="ECO:0000255" key="2">
    <source>
        <dbReference type="PROSITE-ProRule" id="PRU00257"/>
    </source>
</evidence>
<evidence type="ECO:0000305" key="3"/>
<accession>P9WJA6</accession>
<accession>L0TB29</accession>
<accession>P95258</accession>
<accession>Q7D7P8</accession>
<gene>
    <name evidence="3" type="primary">higA1</name>
    <name type="ordered locus">MT2005</name>
</gene>
<keyword id="KW-0238">DNA-binding</keyword>
<keyword id="KW-1185">Reference proteome</keyword>
<keyword id="KW-0678">Repressor</keyword>
<keyword id="KW-1277">Toxin-antitoxin system</keyword>
<keyword id="KW-0804">Transcription</keyword>
<keyword id="KW-0805">Transcription regulation</keyword>
<reference key="1">
    <citation type="journal article" date="2002" name="J. Bacteriol.">
        <title>Whole-genome comparison of Mycobacterium tuberculosis clinical and laboratory strains.</title>
        <authorList>
            <person name="Fleischmann R.D."/>
            <person name="Alland D."/>
            <person name="Eisen J.A."/>
            <person name="Carpenter L."/>
            <person name="White O."/>
            <person name="Peterson J.D."/>
            <person name="DeBoy R.T."/>
            <person name="Dodson R.J."/>
            <person name="Gwinn M.L."/>
            <person name="Haft D.H."/>
            <person name="Hickey E.K."/>
            <person name="Kolonay J.F."/>
            <person name="Nelson W.C."/>
            <person name="Umayam L.A."/>
            <person name="Ermolaeva M.D."/>
            <person name="Salzberg S.L."/>
            <person name="Delcher A."/>
            <person name="Utterback T.R."/>
            <person name="Weidman J.F."/>
            <person name="Khouri H.M."/>
            <person name="Gill J."/>
            <person name="Mikula A."/>
            <person name="Bishai W."/>
            <person name="Jacobs W.R. Jr."/>
            <person name="Venter J.C."/>
            <person name="Fraser C.M."/>
        </authorList>
    </citation>
    <scope>NUCLEOTIDE SEQUENCE [LARGE SCALE GENOMIC DNA]</scope>
    <source>
        <strain>CDC 1551 / Oshkosh</strain>
    </source>
</reference>
<comment type="function">
    <text evidence="1">Antitoxin component of an atypical, type II toxin-antitoxin chaperone (TAC) system. Probably neutralizes the toxic effects of cognate toxin HigB1, which also requires SecB-like chaperone MT2006 (AC Q7D7P7). Autorepresses its operon (higB1-higA1-MT2006).</text>
</comment>
<comment type="subunit">
    <text evidence="1">Interacts with SecB-like chaperone MT2006.</text>
</comment>
<comment type="induction">
    <text evidence="1">Autorepresses its operon (higB1-higA1-MT2006).</text>
</comment>
<dbReference type="EMBL" id="AE000516">
    <property type="protein sequence ID" value="AAK46277.1"/>
    <property type="molecule type" value="Genomic_DNA"/>
</dbReference>
<dbReference type="PIR" id="H70638">
    <property type="entry name" value="H70638"/>
</dbReference>
<dbReference type="SMR" id="P9WJA6"/>
<dbReference type="KEGG" id="mtc:MT2005"/>
<dbReference type="PATRIC" id="fig|83331.31.peg.2161"/>
<dbReference type="HOGENOM" id="CLU_137917_0_0_11"/>
<dbReference type="Proteomes" id="UP000001020">
    <property type="component" value="Chromosome"/>
</dbReference>
<dbReference type="GO" id="GO:0003677">
    <property type="term" value="F:DNA binding"/>
    <property type="evidence" value="ECO:0007669"/>
    <property type="project" value="UniProtKB-KW"/>
</dbReference>
<dbReference type="CDD" id="cd00093">
    <property type="entry name" value="HTH_XRE"/>
    <property type="match status" value="1"/>
</dbReference>
<dbReference type="Gene3D" id="1.10.260.40">
    <property type="entry name" value="lambda repressor-like DNA-binding domains"/>
    <property type="match status" value="1"/>
</dbReference>
<dbReference type="InterPro" id="IPR001387">
    <property type="entry name" value="Cro/C1-type_HTH"/>
</dbReference>
<dbReference type="InterPro" id="IPR010982">
    <property type="entry name" value="Lambda_DNA-bd_dom_sf"/>
</dbReference>
<dbReference type="Pfam" id="PF01381">
    <property type="entry name" value="HTH_3"/>
    <property type="match status" value="1"/>
</dbReference>
<dbReference type="SMART" id="SM00530">
    <property type="entry name" value="HTH_XRE"/>
    <property type="match status" value="1"/>
</dbReference>
<dbReference type="SUPFAM" id="SSF47413">
    <property type="entry name" value="lambda repressor-like DNA-binding domains"/>
    <property type="match status" value="1"/>
</dbReference>
<dbReference type="PROSITE" id="PS50943">
    <property type="entry name" value="HTH_CROC1"/>
    <property type="match status" value="1"/>
</dbReference>
<feature type="chain" id="PRO_0000427863" description="Antitoxin HigA1">
    <location>
        <begin position="1"/>
        <end position="149"/>
    </location>
</feature>
<feature type="domain" description="HTH cro/C1-type" evidence="2">
    <location>
        <begin position="42"/>
        <end position="96"/>
    </location>
</feature>
<feature type="DNA-binding region" description="H-T-H motif" evidence="2">
    <location>
        <begin position="53"/>
        <end position="72"/>
    </location>
</feature>
<organism>
    <name type="scientific">Mycobacterium tuberculosis (strain CDC 1551 / Oshkosh)</name>
    <dbReference type="NCBI Taxonomy" id="83331"/>
    <lineage>
        <taxon>Bacteria</taxon>
        <taxon>Bacillati</taxon>
        <taxon>Actinomycetota</taxon>
        <taxon>Actinomycetes</taxon>
        <taxon>Mycobacteriales</taxon>
        <taxon>Mycobacteriaceae</taxon>
        <taxon>Mycobacterium</taxon>
        <taxon>Mycobacterium tuberculosis complex</taxon>
    </lineage>
</organism>